<comment type="function">
    <text evidence="1">Catalyzes the hydrolysis of 4-amino-2-methyl-5-hydroxymethylpyrimidine pyrophosphate (HMP-PP) to 4-amino-2-methyl-5-hydroxymethylpyrimidine phosphate (HMP-P).</text>
</comment>
<comment type="catalytic activity">
    <reaction evidence="1">
        <text>4-amino-2-methyl-5-(diphosphooxymethyl)pyrimidine + H2O = 4-amino-2-methyl-5-(phosphooxymethyl)pyrimidine + phosphate + H(+)</text>
        <dbReference type="Rhea" id="RHEA:27914"/>
        <dbReference type="ChEBI" id="CHEBI:15377"/>
        <dbReference type="ChEBI" id="CHEBI:15378"/>
        <dbReference type="ChEBI" id="CHEBI:43474"/>
        <dbReference type="ChEBI" id="CHEBI:57841"/>
        <dbReference type="ChEBI" id="CHEBI:58354"/>
    </reaction>
</comment>
<comment type="cofactor">
    <cofactor evidence="1">
        <name>Mg(2+)</name>
        <dbReference type="ChEBI" id="CHEBI:18420"/>
    </cofactor>
</comment>
<comment type="similarity">
    <text evidence="1">Belongs to the HAD-like hydrolase superfamily. Cof family.</text>
</comment>
<sequence>MYRLAAFDMDGTLLMRDHKIGSITLNALHQLADAGVTLTFATGRHYLDMKGILSHSGLNGYLITGNGTRVCDAEGNPLYGMDLPAELVEFVLRTPWQTNASIHLFRDDGWFTDRNDPDLLIAHTTSGFHFQLTEWDELPLTGNHKFCFIASHQELVELKAQLEQQMSGEADFCFSATDCLEVLPRGCNKGVALEKLSHHLDLTLADCMAFGDAMNDKEMLSRVGRGLVMGNALPQLKQELPQLQIIGRCEQQGVAHYLHHWLSSPHLTYSPEF</sequence>
<accession>B1JHR2</accession>
<reference key="1">
    <citation type="submission" date="2008-02" db="EMBL/GenBank/DDBJ databases">
        <title>Complete sequence of Yersinia pseudotuberculosis YPIII.</title>
        <authorList>
            <consortium name="US DOE Joint Genome Institute"/>
            <person name="Copeland A."/>
            <person name="Lucas S."/>
            <person name="Lapidus A."/>
            <person name="Glavina del Rio T."/>
            <person name="Dalin E."/>
            <person name="Tice H."/>
            <person name="Bruce D."/>
            <person name="Goodwin L."/>
            <person name="Pitluck S."/>
            <person name="Munk A.C."/>
            <person name="Brettin T."/>
            <person name="Detter J.C."/>
            <person name="Han C."/>
            <person name="Tapia R."/>
            <person name="Schmutz J."/>
            <person name="Larimer F."/>
            <person name="Land M."/>
            <person name="Hauser L."/>
            <person name="Challacombe J.F."/>
            <person name="Green L."/>
            <person name="Lindler L.E."/>
            <person name="Nikolich M.P."/>
            <person name="Richardson P."/>
        </authorList>
    </citation>
    <scope>NUCLEOTIDE SEQUENCE [LARGE SCALE GENOMIC DNA]</scope>
    <source>
        <strain>YPIII</strain>
    </source>
</reference>
<gene>
    <name evidence="1" type="primary">cof</name>
    <name type="ordered locus">YPK_3225</name>
</gene>
<proteinExistence type="inferred from homology"/>
<protein>
    <recommendedName>
        <fullName evidence="1">HMP-PP phosphatase</fullName>
        <ecNumber evidence="1">3.6.1.-</ecNumber>
    </recommendedName>
</protein>
<dbReference type="EC" id="3.6.1.-" evidence="1"/>
<dbReference type="EMBL" id="CP000950">
    <property type="protein sequence ID" value="ACA69494.1"/>
    <property type="molecule type" value="Genomic_DNA"/>
</dbReference>
<dbReference type="RefSeq" id="WP_012105573.1">
    <property type="nucleotide sequence ID" value="NZ_CP009792.1"/>
</dbReference>
<dbReference type="SMR" id="B1JHR2"/>
<dbReference type="KEGG" id="ypy:YPK_3225"/>
<dbReference type="PATRIC" id="fig|502800.11.peg.3952"/>
<dbReference type="GO" id="GO:0002145">
    <property type="term" value="F:4-amino-5-hydroxymethyl-2-methylpyrimidine diphosphatase activity"/>
    <property type="evidence" value="ECO:0007669"/>
    <property type="project" value="RHEA"/>
</dbReference>
<dbReference type="GO" id="GO:0000287">
    <property type="term" value="F:magnesium ion binding"/>
    <property type="evidence" value="ECO:0000250"/>
    <property type="project" value="UniProtKB"/>
</dbReference>
<dbReference type="GO" id="GO:0016791">
    <property type="term" value="F:phosphatase activity"/>
    <property type="evidence" value="ECO:0000250"/>
    <property type="project" value="UniProtKB"/>
</dbReference>
<dbReference type="CDD" id="cd07516">
    <property type="entry name" value="HAD_Pase"/>
    <property type="match status" value="1"/>
</dbReference>
<dbReference type="FunFam" id="3.30.1240.10:FF:000018">
    <property type="entry name" value="HMP-PP phosphatase"/>
    <property type="match status" value="1"/>
</dbReference>
<dbReference type="Gene3D" id="3.30.1240.10">
    <property type="match status" value="1"/>
</dbReference>
<dbReference type="Gene3D" id="3.40.50.1000">
    <property type="entry name" value="HAD superfamily/HAD-like"/>
    <property type="match status" value="1"/>
</dbReference>
<dbReference type="HAMAP" id="MF_01847">
    <property type="entry name" value="HMP_PP_phosphat"/>
    <property type="match status" value="1"/>
</dbReference>
<dbReference type="InterPro" id="IPR000150">
    <property type="entry name" value="Cof"/>
</dbReference>
<dbReference type="InterPro" id="IPR036412">
    <property type="entry name" value="HAD-like_sf"/>
</dbReference>
<dbReference type="InterPro" id="IPR006379">
    <property type="entry name" value="HAD-SF_hydro_IIB"/>
</dbReference>
<dbReference type="InterPro" id="IPR023214">
    <property type="entry name" value="HAD_sf"/>
</dbReference>
<dbReference type="InterPro" id="IPR023938">
    <property type="entry name" value="HMP-PP_phosphatase"/>
</dbReference>
<dbReference type="NCBIfam" id="TIGR00099">
    <property type="entry name" value="Cof-subfamily"/>
    <property type="match status" value="1"/>
</dbReference>
<dbReference type="NCBIfam" id="TIGR01484">
    <property type="entry name" value="HAD-SF-IIB"/>
    <property type="match status" value="1"/>
</dbReference>
<dbReference type="NCBIfam" id="NF011705">
    <property type="entry name" value="PRK15126.1"/>
    <property type="match status" value="1"/>
</dbReference>
<dbReference type="PANTHER" id="PTHR47267">
    <property type="match status" value="1"/>
</dbReference>
<dbReference type="PANTHER" id="PTHR47267:SF2">
    <property type="entry name" value="HMP-PP PHOSPHATASE"/>
    <property type="match status" value="1"/>
</dbReference>
<dbReference type="Pfam" id="PF08282">
    <property type="entry name" value="Hydrolase_3"/>
    <property type="match status" value="1"/>
</dbReference>
<dbReference type="SFLD" id="SFLDG01140">
    <property type="entry name" value="C2.B:_Phosphomannomutase_and_P"/>
    <property type="match status" value="1"/>
</dbReference>
<dbReference type="SFLD" id="SFLDS00003">
    <property type="entry name" value="Haloacid_Dehalogenase"/>
    <property type="match status" value="1"/>
</dbReference>
<dbReference type="SUPFAM" id="SSF56784">
    <property type="entry name" value="HAD-like"/>
    <property type="match status" value="1"/>
</dbReference>
<dbReference type="PROSITE" id="PS01228">
    <property type="entry name" value="COF_1"/>
    <property type="match status" value="1"/>
</dbReference>
<dbReference type="PROSITE" id="PS01229">
    <property type="entry name" value="COF_2"/>
    <property type="match status" value="1"/>
</dbReference>
<keyword id="KW-0378">Hydrolase</keyword>
<keyword id="KW-0460">Magnesium</keyword>
<keyword id="KW-0479">Metal-binding</keyword>
<evidence type="ECO:0000255" key="1">
    <source>
        <dbReference type="HAMAP-Rule" id="MF_01847"/>
    </source>
</evidence>
<organism>
    <name type="scientific">Yersinia pseudotuberculosis serotype O:3 (strain YPIII)</name>
    <dbReference type="NCBI Taxonomy" id="502800"/>
    <lineage>
        <taxon>Bacteria</taxon>
        <taxon>Pseudomonadati</taxon>
        <taxon>Pseudomonadota</taxon>
        <taxon>Gammaproteobacteria</taxon>
        <taxon>Enterobacterales</taxon>
        <taxon>Yersiniaceae</taxon>
        <taxon>Yersinia</taxon>
    </lineage>
</organism>
<feature type="chain" id="PRO_0000343007" description="HMP-PP phosphatase">
    <location>
        <begin position="1"/>
        <end position="273"/>
    </location>
</feature>
<feature type="active site" description="Nucleophile" evidence="1">
    <location>
        <position position="8"/>
    </location>
</feature>
<feature type="binding site" evidence="1">
    <location>
        <position position="8"/>
    </location>
    <ligand>
        <name>Mg(2+)</name>
        <dbReference type="ChEBI" id="CHEBI:18420"/>
    </ligand>
</feature>
<feature type="binding site" evidence="1">
    <location>
        <position position="10"/>
    </location>
    <ligand>
        <name>Mg(2+)</name>
        <dbReference type="ChEBI" id="CHEBI:18420"/>
    </ligand>
</feature>
<feature type="binding site" evidence="1">
    <location>
        <position position="212"/>
    </location>
    <ligand>
        <name>Mg(2+)</name>
        <dbReference type="ChEBI" id="CHEBI:18420"/>
    </ligand>
</feature>
<name>COF_YERPY</name>